<comment type="catalytic activity">
    <reaction>
        <text>L-seryl-[protein] + ATP = O-phospho-L-seryl-[protein] + ADP + H(+)</text>
        <dbReference type="Rhea" id="RHEA:17989"/>
        <dbReference type="Rhea" id="RHEA-COMP:9863"/>
        <dbReference type="Rhea" id="RHEA-COMP:11604"/>
        <dbReference type="ChEBI" id="CHEBI:15378"/>
        <dbReference type="ChEBI" id="CHEBI:29999"/>
        <dbReference type="ChEBI" id="CHEBI:30616"/>
        <dbReference type="ChEBI" id="CHEBI:83421"/>
        <dbReference type="ChEBI" id="CHEBI:456216"/>
        <dbReference type="EC" id="2.7.11.1"/>
    </reaction>
</comment>
<comment type="catalytic activity">
    <reaction>
        <text>L-threonyl-[protein] + ATP = O-phospho-L-threonyl-[protein] + ADP + H(+)</text>
        <dbReference type="Rhea" id="RHEA:46608"/>
        <dbReference type="Rhea" id="RHEA-COMP:11060"/>
        <dbReference type="Rhea" id="RHEA-COMP:11605"/>
        <dbReference type="ChEBI" id="CHEBI:15378"/>
        <dbReference type="ChEBI" id="CHEBI:30013"/>
        <dbReference type="ChEBI" id="CHEBI:30616"/>
        <dbReference type="ChEBI" id="CHEBI:61977"/>
        <dbReference type="ChEBI" id="CHEBI:456216"/>
        <dbReference type="EC" id="2.7.11.1"/>
    </reaction>
</comment>
<comment type="similarity">
    <text evidence="7">Belongs to the protein kinase superfamily. AGC Ser/Thr protein kinase family.</text>
</comment>
<evidence type="ECO:0000255" key="1">
    <source>
        <dbReference type="PROSITE-ProRule" id="PRU00145"/>
    </source>
</evidence>
<evidence type="ECO:0000255" key="2">
    <source>
        <dbReference type="PROSITE-ProRule" id="PRU00147"/>
    </source>
</evidence>
<evidence type="ECO:0000255" key="3">
    <source>
        <dbReference type="PROSITE-ProRule" id="PRU00159"/>
    </source>
</evidence>
<evidence type="ECO:0000255" key="4">
    <source>
        <dbReference type="PROSITE-ProRule" id="PRU00618"/>
    </source>
</evidence>
<evidence type="ECO:0000255" key="5">
    <source>
        <dbReference type="PROSITE-ProRule" id="PRU10027"/>
    </source>
</evidence>
<evidence type="ECO:0000256" key="6">
    <source>
        <dbReference type="SAM" id="MobiDB-lite"/>
    </source>
</evidence>
<evidence type="ECO:0000305" key="7"/>
<feature type="chain" id="PRO_0000362041" description="Probable serine/threonine-protein kinase DDB_G0272282">
    <location>
        <begin position="1"/>
        <end position="2102"/>
    </location>
</feature>
<feature type="domain" description="PX" evidence="2">
    <location>
        <begin position="1"/>
        <end position="118"/>
    </location>
</feature>
<feature type="domain" description="PH" evidence="1">
    <location>
        <begin position="124"/>
        <end position="222"/>
    </location>
</feature>
<feature type="domain" description="Protein kinase" evidence="3">
    <location>
        <begin position="1527"/>
        <end position="1851"/>
    </location>
</feature>
<feature type="domain" description="AGC-kinase C-terminal" evidence="4">
    <location>
        <begin position="1852"/>
        <end position="1911"/>
    </location>
</feature>
<feature type="region of interest" description="Disordered" evidence="6">
    <location>
        <begin position="225"/>
        <end position="289"/>
    </location>
</feature>
<feature type="region of interest" description="Disordered" evidence="6">
    <location>
        <begin position="302"/>
        <end position="390"/>
    </location>
</feature>
<feature type="region of interest" description="Disordered" evidence="6">
    <location>
        <begin position="426"/>
        <end position="558"/>
    </location>
</feature>
<feature type="region of interest" description="Disordered" evidence="6">
    <location>
        <begin position="574"/>
        <end position="665"/>
    </location>
</feature>
<feature type="region of interest" description="Disordered" evidence="6">
    <location>
        <begin position="685"/>
        <end position="768"/>
    </location>
</feature>
<feature type="region of interest" description="Disordered" evidence="6">
    <location>
        <begin position="804"/>
        <end position="842"/>
    </location>
</feature>
<feature type="region of interest" description="Disordered" evidence="6">
    <location>
        <begin position="1029"/>
        <end position="1051"/>
    </location>
</feature>
<feature type="region of interest" description="Disordered" evidence="6">
    <location>
        <begin position="1106"/>
        <end position="1224"/>
    </location>
</feature>
<feature type="region of interest" description="Disordered" evidence="6">
    <location>
        <begin position="1476"/>
        <end position="1514"/>
    </location>
</feature>
<feature type="region of interest" description="Disordered" evidence="6">
    <location>
        <begin position="1687"/>
        <end position="1741"/>
    </location>
</feature>
<feature type="region of interest" description="Disordered" evidence="6">
    <location>
        <begin position="1902"/>
        <end position="2070"/>
    </location>
</feature>
<feature type="compositionally biased region" description="Basic and acidic residues" evidence="6">
    <location>
        <begin position="225"/>
        <end position="240"/>
    </location>
</feature>
<feature type="compositionally biased region" description="Low complexity" evidence="6">
    <location>
        <begin position="256"/>
        <end position="281"/>
    </location>
</feature>
<feature type="compositionally biased region" description="Low complexity" evidence="6">
    <location>
        <begin position="304"/>
        <end position="327"/>
    </location>
</feature>
<feature type="compositionally biased region" description="Basic residues" evidence="6">
    <location>
        <begin position="328"/>
        <end position="348"/>
    </location>
</feature>
<feature type="compositionally biased region" description="Low complexity" evidence="6">
    <location>
        <begin position="353"/>
        <end position="376"/>
    </location>
</feature>
<feature type="compositionally biased region" description="Low complexity" evidence="6">
    <location>
        <begin position="426"/>
        <end position="437"/>
    </location>
</feature>
<feature type="compositionally biased region" description="Gly residues" evidence="6">
    <location>
        <begin position="438"/>
        <end position="450"/>
    </location>
</feature>
<feature type="compositionally biased region" description="Low complexity" evidence="6">
    <location>
        <begin position="466"/>
        <end position="484"/>
    </location>
</feature>
<feature type="compositionally biased region" description="Gly residues" evidence="6">
    <location>
        <begin position="485"/>
        <end position="501"/>
    </location>
</feature>
<feature type="compositionally biased region" description="Low complexity" evidence="6">
    <location>
        <begin position="535"/>
        <end position="558"/>
    </location>
</feature>
<feature type="compositionally biased region" description="Low complexity" evidence="6">
    <location>
        <begin position="587"/>
        <end position="626"/>
    </location>
</feature>
<feature type="compositionally biased region" description="Polar residues" evidence="6">
    <location>
        <begin position="627"/>
        <end position="659"/>
    </location>
</feature>
<feature type="compositionally biased region" description="Basic and acidic residues" evidence="6">
    <location>
        <begin position="804"/>
        <end position="824"/>
    </location>
</feature>
<feature type="compositionally biased region" description="Polar residues" evidence="6">
    <location>
        <begin position="827"/>
        <end position="841"/>
    </location>
</feature>
<feature type="compositionally biased region" description="Polar residues" evidence="6">
    <location>
        <begin position="1106"/>
        <end position="1118"/>
    </location>
</feature>
<feature type="compositionally biased region" description="Low complexity" evidence="6">
    <location>
        <begin position="1119"/>
        <end position="1182"/>
    </location>
</feature>
<feature type="compositionally biased region" description="Low complexity" evidence="6">
    <location>
        <begin position="1196"/>
        <end position="1221"/>
    </location>
</feature>
<feature type="compositionally biased region" description="Low complexity" evidence="6">
    <location>
        <begin position="1476"/>
        <end position="1492"/>
    </location>
</feature>
<feature type="compositionally biased region" description="Pro residues" evidence="6">
    <location>
        <begin position="1493"/>
        <end position="1507"/>
    </location>
</feature>
<feature type="compositionally biased region" description="Low complexity" evidence="6">
    <location>
        <begin position="1687"/>
        <end position="1729"/>
    </location>
</feature>
<feature type="compositionally biased region" description="Low complexity" evidence="6">
    <location>
        <begin position="1902"/>
        <end position="1999"/>
    </location>
</feature>
<feature type="compositionally biased region" description="Low complexity" evidence="6">
    <location>
        <begin position="2006"/>
        <end position="2052"/>
    </location>
</feature>
<feature type="active site" description="Proton acceptor" evidence="3 5">
    <location>
        <position position="1650"/>
    </location>
</feature>
<feature type="binding site" evidence="3">
    <location>
        <begin position="1533"/>
        <end position="1541"/>
    </location>
    <ligand>
        <name>ATP</name>
        <dbReference type="ChEBI" id="CHEBI:30616"/>
    </ligand>
</feature>
<feature type="binding site" evidence="3">
    <location>
        <position position="1556"/>
    </location>
    <ligand>
        <name>ATP</name>
        <dbReference type="ChEBI" id="CHEBI:30616"/>
    </ligand>
</feature>
<protein>
    <recommendedName>
        <fullName>Probable serine/threonine-protein kinase DDB_G0272282</fullName>
        <ecNumber>2.7.11.1</ecNumber>
    </recommendedName>
</protein>
<reference key="1">
    <citation type="journal article" date="2002" name="Nature">
        <title>Sequence and analysis of chromosome 2 of Dictyostelium discoideum.</title>
        <authorList>
            <person name="Gloeckner G."/>
            <person name="Eichinger L."/>
            <person name="Szafranski K."/>
            <person name="Pachebat J.A."/>
            <person name="Bankier A.T."/>
            <person name="Dear P.H."/>
            <person name="Lehmann R."/>
            <person name="Baumgart C."/>
            <person name="Parra G."/>
            <person name="Abril J.F."/>
            <person name="Guigo R."/>
            <person name="Kumpf K."/>
            <person name="Tunggal B."/>
            <person name="Cox E.C."/>
            <person name="Quail M.A."/>
            <person name="Platzer M."/>
            <person name="Rosenthal A."/>
            <person name="Noegel A.A."/>
        </authorList>
    </citation>
    <scope>NUCLEOTIDE SEQUENCE [LARGE SCALE GENOMIC DNA]</scope>
    <source>
        <strain>AX4</strain>
    </source>
</reference>
<reference key="2">
    <citation type="journal article" date="2005" name="Nature">
        <title>The genome of the social amoeba Dictyostelium discoideum.</title>
        <authorList>
            <person name="Eichinger L."/>
            <person name="Pachebat J.A."/>
            <person name="Gloeckner G."/>
            <person name="Rajandream M.A."/>
            <person name="Sucgang R."/>
            <person name="Berriman M."/>
            <person name="Song J."/>
            <person name="Olsen R."/>
            <person name="Szafranski K."/>
            <person name="Xu Q."/>
            <person name="Tunggal B."/>
            <person name="Kummerfeld S."/>
            <person name="Madera M."/>
            <person name="Konfortov B.A."/>
            <person name="Rivero F."/>
            <person name="Bankier A.T."/>
            <person name="Lehmann R."/>
            <person name="Hamlin N."/>
            <person name="Davies R."/>
            <person name="Gaudet P."/>
            <person name="Fey P."/>
            <person name="Pilcher K."/>
            <person name="Chen G."/>
            <person name="Saunders D."/>
            <person name="Sodergren E.J."/>
            <person name="Davis P."/>
            <person name="Kerhornou A."/>
            <person name="Nie X."/>
            <person name="Hall N."/>
            <person name="Anjard C."/>
            <person name="Hemphill L."/>
            <person name="Bason N."/>
            <person name="Farbrother P."/>
            <person name="Desany B."/>
            <person name="Just E."/>
            <person name="Morio T."/>
            <person name="Rost R."/>
            <person name="Churcher C.M."/>
            <person name="Cooper J."/>
            <person name="Haydock S."/>
            <person name="van Driessche N."/>
            <person name="Cronin A."/>
            <person name="Goodhead I."/>
            <person name="Muzny D.M."/>
            <person name="Mourier T."/>
            <person name="Pain A."/>
            <person name="Lu M."/>
            <person name="Harper D."/>
            <person name="Lindsay R."/>
            <person name="Hauser H."/>
            <person name="James K.D."/>
            <person name="Quiles M."/>
            <person name="Madan Babu M."/>
            <person name="Saito T."/>
            <person name="Buchrieser C."/>
            <person name="Wardroper A."/>
            <person name="Felder M."/>
            <person name="Thangavelu M."/>
            <person name="Johnson D."/>
            <person name="Knights A."/>
            <person name="Loulseged H."/>
            <person name="Mungall K.L."/>
            <person name="Oliver K."/>
            <person name="Price C."/>
            <person name="Quail M.A."/>
            <person name="Urushihara H."/>
            <person name="Hernandez J."/>
            <person name="Rabbinowitsch E."/>
            <person name="Steffen D."/>
            <person name="Sanders M."/>
            <person name="Ma J."/>
            <person name="Kohara Y."/>
            <person name="Sharp S."/>
            <person name="Simmonds M.N."/>
            <person name="Spiegler S."/>
            <person name="Tivey A."/>
            <person name="Sugano S."/>
            <person name="White B."/>
            <person name="Walker D."/>
            <person name="Woodward J.R."/>
            <person name="Winckler T."/>
            <person name="Tanaka Y."/>
            <person name="Shaulsky G."/>
            <person name="Schleicher M."/>
            <person name="Weinstock G.M."/>
            <person name="Rosenthal A."/>
            <person name="Cox E.C."/>
            <person name="Chisholm R.L."/>
            <person name="Gibbs R.A."/>
            <person name="Loomis W.F."/>
            <person name="Platzer M."/>
            <person name="Kay R.R."/>
            <person name="Williams J.G."/>
            <person name="Dear P.H."/>
            <person name="Noegel A.A."/>
            <person name="Barrell B.G."/>
            <person name="Kuspa A."/>
        </authorList>
    </citation>
    <scope>NUCLEOTIDE SEQUENCE [LARGE SCALE GENOMIC DNA]</scope>
    <source>
        <strain>AX4</strain>
    </source>
</reference>
<sequence>MKYQLSILGDESRLDPTTFNAFTVYMVNVTNLMTNRQWNIYRRYSQFHELDSEIKSAFPKIKLPKLPKKYIFKNSTNRELVEERKLLLQKYLKDLVKHEQIEDSDCLINWLVPQNEPAFTSLNNPDKSGYLIKEGHVIRSWKKRYFVLKDGLIYYFKHQSDQEPTGMIPVIGSQIKRIGETERKFSFQIIPKNETFFPTFSIQARDEQDCNDWIKAIELSQQHFQDQEQYRKQEEEERQKKNNGARIKKSGSFEFSTLTSASAPTSPVQSSSSTSNMLPSSYQFSSDGSNNNSVCSSIGALGPNNSNNNNNNNNNSYYYSHSSNNHNHYNHHNNNHNNSHHHHHHHNGLNRGSSQVSLSVNTTSSNSSGSSSSTSLSRRHPPQKSKSDLNLSSVLHSNIRIGIDESDELYILNNSISNENLSSMLEQPGSYQQPQHQQGGGGGGGGGGGNIVNNLPPLSLTQRHISNLSSRSNSNSSGSSSGSGSSSGSGPIGSGGVGGGLNQPVKTSSQQPHHRKSNSSNNPSYISHLHYLQPSNSSSSISSSSSSSSASSASSASPFSSLFTTINQYFNPKSNLPYSPPSSPILNANNNNNNNNNNNNNNNNNNNNDFNLNNNNNNNNNNNNGNTASGSSCNTTPNLLPAPTNVSPIQNRARSSPMTSLPLPNNLLIPIPVFSLNDEYNNINNNNSNIESNNNNNNNNNNNNNNNNNNNNNNNNNNNNNNNNNNNNNNNNNNNTTELVNNNIESNDNDNNNSNNNNNNNNNSNNSLDLINKPLVKIIEPKKKEKKSKSKSKVASISDFITSKKKEKDKEKEKDKEKEKEKEIGGNISTSTTPNKKNGTLRSRALTLPVKPNDSILGTTPHHNHQNNHHHHGDISSINIIREKFISKTTRFSSDGKPRFDINQKLVSTKLSVDKKIRNFIEVVIDDIDHEATSGGNLQKQQHTQLIANDIKKLANTVLNMSVYDQREKNTQIVQSIQTLFATAISNKEMTSLVSKFLFIFSEFSRVVDVLNPVEKNLTNVINKQLQSQQQQQKQNETTGTTTGTAGSSVNPLSFSSNSILVQQKRLSRSLQSFNEINHHYSSSYHEPIIYSSSLNQYNGINIGSGTPTTTSGDNTPLTNTATSSTVSSYSEPSLISSQNQLPLSQQPQPQPQQQQQLNDSSSFPTSPISSRNDLISSNSSIYEPPLSDVASQLIEQQQEQQQQQHQEQPLQPQQQQQQQPQPQPISTLVFDKANQRSSSPILEKKSILTDLLKENYQKETTNNNGIGNMIILSEYDKKLQKQQLYPNQHVIITEEMRNKPERSFVCRICEDTYTQSQLAKHTPFCALTNKHDFKNHSSHDERLYSILNLVKGIICDSFASPNNSEQYSYLIDDEIISQLGQQLEYLFNIPYGPVESPKQCQDVINRVQAIIDENSTDMALHVFGKRICKIIEEKKALFVQYSKFQNAAQTTTSKGKKWSMWGIIPFIKDIIPSPSSKVDSSSSSQISSPILSSPPPPMKQPPPQVIVPPSSLTTSSNTTSISIADFEIIKPISRGAFGRVYLAQKKKTGDLYAIKVLKKLDTIRKNMVNHVIVERNILAMVQNEFVVKLFYAFQSTDKLYLVMEYLIGGDCASLLRALGCFEEHMAKHYIAETVLCLEYLHKSAIVHRDLKPDNMLIDGLGHIKLTDFGLSKIGIIDDKKMEDSGNTNTNTHFNFSTSPTNTSMMDDSSTTGNPNGNGNTSLNSSQTNILSPYPQRKNTLKTPLKKPVKKVVGTPDYLSPEILLGTGHGQTVDWWALGIILYEFLTGSPPFNDDTPELIFQHILHRDREMEWPEEISSEAKDLILKLLNPDPYKRLGANGAYEVKTHPFFANVNWDTLIDQEMDNIFLPKPENNYDTDYFWDRQSMYDDEAEDDFLTINQSQPQHQSQHQSQPQSQPQPQSQNLGQNNNNSESNNNNNNSNSNVSGQNINNSVSSSSNNNGSGNLNNICNNSNVNANNNNSNGNLGNNNNNKNNNINNDNDKNKNNNSNVQNNNNNNNNNILQQSSSPSSTSSSLSNSSNNNHNGGRQINNSKDSDNSIGGGKNNSKIEDIEKDPITFGNFSFTNINHLKDMNNFFLKNKS</sequence>
<name>Y0701_DICDI</name>
<keyword id="KW-0067">ATP-binding</keyword>
<keyword id="KW-0418">Kinase</keyword>
<keyword id="KW-0547">Nucleotide-binding</keyword>
<keyword id="KW-1185">Reference proteome</keyword>
<keyword id="KW-0723">Serine/threonine-protein kinase</keyword>
<keyword id="KW-0808">Transferase</keyword>
<dbReference type="EC" id="2.7.11.1"/>
<dbReference type="EMBL" id="AAFI02000008">
    <property type="protein sequence ID" value="EAL71293.1"/>
    <property type="molecule type" value="Genomic_DNA"/>
</dbReference>
<dbReference type="RefSeq" id="XP_645246.1">
    <property type="nucleotide sequence ID" value="XM_640154.1"/>
</dbReference>
<dbReference type="SMR" id="Q559T8"/>
<dbReference type="FunCoup" id="Q559T8">
    <property type="interactions" value="4"/>
</dbReference>
<dbReference type="PaxDb" id="44689-DDB0220701"/>
<dbReference type="EnsemblProtists" id="EAL71293">
    <property type="protein sequence ID" value="EAL71293"/>
    <property type="gene ID" value="DDB_G0272282"/>
</dbReference>
<dbReference type="GeneID" id="8618413"/>
<dbReference type="KEGG" id="ddi:DDB_G0272282"/>
<dbReference type="dictyBase" id="DDB_G0272282"/>
<dbReference type="VEuPathDB" id="AmoebaDB:DDB_G0272282"/>
<dbReference type="eggNOG" id="KOG0606">
    <property type="taxonomic scope" value="Eukaryota"/>
</dbReference>
<dbReference type="HOGENOM" id="CLU_232370_0_0_1"/>
<dbReference type="InParanoid" id="Q559T8"/>
<dbReference type="OMA" id="VCRICED"/>
<dbReference type="PRO" id="PR:Q559T8"/>
<dbReference type="Proteomes" id="UP000002195">
    <property type="component" value="Chromosome 2"/>
</dbReference>
<dbReference type="GO" id="GO:0005524">
    <property type="term" value="F:ATP binding"/>
    <property type="evidence" value="ECO:0007669"/>
    <property type="project" value="UniProtKB-KW"/>
</dbReference>
<dbReference type="GO" id="GO:0035091">
    <property type="term" value="F:phosphatidylinositol binding"/>
    <property type="evidence" value="ECO:0007669"/>
    <property type="project" value="InterPro"/>
</dbReference>
<dbReference type="GO" id="GO:0106310">
    <property type="term" value="F:protein serine kinase activity"/>
    <property type="evidence" value="ECO:0007669"/>
    <property type="project" value="RHEA"/>
</dbReference>
<dbReference type="GO" id="GO:0004674">
    <property type="term" value="F:protein serine/threonine kinase activity"/>
    <property type="evidence" value="ECO:0000318"/>
    <property type="project" value="GO_Central"/>
</dbReference>
<dbReference type="GO" id="GO:0035556">
    <property type="term" value="P:intracellular signal transduction"/>
    <property type="evidence" value="ECO:0000318"/>
    <property type="project" value="GO_Central"/>
</dbReference>
<dbReference type="CDD" id="cd06093">
    <property type="entry name" value="PX_domain"/>
    <property type="match status" value="1"/>
</dbReference>
<dbReference type="CDD" id="cd05579">
    <property type="entry name" value="STKc_MAST_like"/>
    <property type="match status" value="1"/>
</dbReference>
<dbReference type="FunFam" id="1.10.510.10:FF:000604">
    <property type="entry name" value="AGC protein kinase"/>
    <property type="match status" value="1"/>
</dbReference>
<dbReference type="FunFam" id="2.30.29.30:FF:000700">
    <property type="entry name" value="Probable serine/threonine-protein kinase DDB_G0272282"/>
    <property type="match status" value="1"/>
</dbReference>
<dbReference type="FunFam" id="3.30.200.20:FF:000550">
    <property type="entry name" value="Serine/threonine-protein kinase greatwall"/>
    <property type="match status" value="1"/>
</dbReference>
<dbReference type="Gene3D" id="3.30.200.20">
    <property type="entry name" value="Phosphorylase Kinase, domain 1"/>
    <property type="match status" value="1"/>
</dbReference>
<dbReference type="Gene3D" id="3.30.1520.10">
    <property type="entry name" value="Phox-like domain"/>
    <property type="match status" value="1"/>
</dbReference>
<dbReference type="Gene3D" id="2.30.29.30">
    <property type="entry name" value="Pleckstrin-homology domain (PH domain)/Phosphotyrosine-binding domain (PTB)"/>
    <property type="match status" value="1"/>
</dbReference>
<dbReference type="Gene3D" id="1.10.510.10">
    <property type="entry name" value="Transferase(Phosphotransferase) domain 1"/>
    <property type="match status" value="1"/>
</dbReference>
<dbReference type="InterPro" id="IPR000961">
    <property type="entry name" value="AGC-kinase_C"/>
</dbReference>
<dbReference type="InterPro" id="IPR011009">
    <property type="entry name" value="Kinase-like_dom_sf"/>
</dbReference>
<dbReference type="InterPro" id="IPR011993">
    <property type="entry name" value="PH-like_dom_sf"/>
</dbReference>
<dbReference type="InterPro" id="IPR001849">
    <property type="entry name" value="PH_domain"/>
</dbReference>
<dbReference type="InterPro" id="IPR000719">
    <property type="entry name" value="Prot_kinase_dom"/>
</dbReference>
<dbReference type="InterPro" id="IPR001683">
    <property type="entry name" value="PX_dom"/>
</dbReference>
<dbReference type="InterPro" id="IPR036871">
    <property type="entry name" value="PX_dom_sf"/>
</dbReference>
<dbReference type="InterPro" id="IPR008271">
    <property type="entry name" value="Ser/Thr_kinase_AS"/>
</dbReference>
<dbReference type="InterPro" id="IPR050236">
    <property type="entry name" value="Ser_Thr_kinase_AGC"/>
</dbReference>
<dbReference type="PANTHER" id="PTHR24356">
    <property type="entry name" value="SERINE/THREONINE-PROTEIN KINASE"/>
    <property type="match status" value="1"/>
</dbReference>
<dbReference type="PANTHER" id="PTHR24356:SF1">
    <property type="entry name" value="SERINE_THREONINE-PROTEIN KINASE GREATWALL"/>
    <property type="match status" value="1"/>
</dbReference>
<dbReference type="Pfam" id="PF00169">
    <property type="entry name" value="PH"/>
    <property type="match status" value="1"/>
</dbReference>
<dbReference type="Pfam" id="PF00069">
    <property type="entry name" value="Pkinase"/>
    <property type="match status" value="2"/>
</dbReference>
<dbReference type="Pfam" id="PF00787">
    <property type="entry name" value="PX"/>
    <property type="match status" value="1"/>
</dbReference>
<dbReference type="SMART" id="SM00233">
    <property type="entry name" value="PH"/>
    <property type="match status" value="1"/>
</dbReference>
<dbReference type="SMART" id="SM00312">
    <property type="entry name" value="PX"/>
    <property type="match status" value="1"/>
</dbReference>
<dbReference type="SMART" id="SM00220">
    <property type="entry name" value="S_TKc"/>
    <property type="match status" value="1"/>
</dbReference>
<dbReference type="SUPFAM" id="SSF50729">
    <property type="entry name" value="PH domain-like"/>
    <property type="match status" value="1"/>
</dbReference>
<dbReference type="SUPFAM" id="SSF56112">
    <property type="entry name" value="Protein kinase-like (PK-like)"/>
    <property type="match status" value="1"/>
</dbReference>
<dbReference type="SUPFAM" id="SSF64268">
    <property type="entry name" value="PX domain"/>
    <property type="match status" value="1"/>
</dbReference>
<dbReference type="PROSITE" id="PS51285">
    <property type="entry name" value="AGC_KINASE_CTER"/>
    <property type="match status" value="1"/>
</dbReference>
<dbReference type="PROSITE" id="PS50003">
    <property type="entry name" value="PH_DOMAIN"/>
    <property type="match status" value="1"/>
</dbReference>
<dbReference type="PROSITE" id="PS50011">
    <property type="entry name" value="PROTEIN_KINASE_DOM"/>
    <property type="match status" value="1"/>
</dbReference>
<dbReference type="PROSITE" id="PS00108">
    <property type="entry name" value="PROTEIN_KINASE_ST"/>
    <property type="match status" value="1"/>
</dbReference>
<dbReference type="PROSITE" id="PS50195">
    <property type="entry name" value="PX"/>
    <property type="match status" value="1"/>
</dbReference>
<gene>
    <name type="ORF">DDB_G0272282</name>
</gene>
<accession>Q559T8</accession>
<accession>Q75JU5</accession>
<proteinExistence type="inferred from homology"/>
<organism>
    <name type="scientific">Dictyostelium discoideum</name>
    <name type="common">Social amoeba</name>
    <dbReference type="NCBI Taxonomy" id="44689"/>
    <lineage>
        <taxon>Eukaryota</taxon>
        <taxon>Amoebozoa</taxon>
        <taxon>Evosea</taxon>
        <taxon>Eumycetozoa</taxon>
        <taxon>Dictyostelia</taxon>
        <taxon>Dictyosteliales</taxon>
        <taxon>Dictyosteliaceae</taxon>
        <taxon>Dictyostelium</taxon>
    </lineage>
</organism>